<protein>
    <recommendedName>
        <fullName evidence="1">Succinate--CoA ligase [ADP-forming] subunit beta</fullName>
        <ecNumber evidence="1">6.2.1.5</ecNumber>
    </recommendedName>
    <alternativeName>
        <fullName evidence="1">Succinyl-CoA synthetase subunit beta</fullName>
        <shortName evidence="1">SCS-beta</shortName>
    </alternativeName>
</protein>
<dbReference type="EC" id="6.2.1.5" evidence="1"/>
<dbReference type="EMBL" id="CP000909">
    <property type="protein sequence ID" value="ABY34351.1"/>
    <property type="molecule type" value="Genomic_DNA"/>
</dbReference>
<dbReference type="RefSeq" id="WP_012257007.1">
    <property type="nucleotide sequence ID" value="NC_010175.1"/>
</dbReference>
<dbReference type="RefSeq" id="YP_001634740.1">
    <property type="nucleotide sequence ID" value="NC_010175.1"/>
</dbReference>
<dbReference type="SMR" id="A9WJ74"/>
<dbReference type="FunCoup" id="A9WJ74">
    <property type="interactions" value="446"/>
</dbReference>
<dbReference type="STRING" id="324602.Caur_1121"/>
<dbReference type="EnsemblBacteria" id="ABY34351">
    <property type="protein sequence ID" value="ABY34351"/>
    <property type="gene ID" value="Caur_1121"/>
</dbReference>
<dbReference type="KEGG" id="cau:Caur_1121"/>
<dbReference type="PATRIC" id="fig|324602.8.peg.1283"/>
<dbReference type="eggNOG" id="COG0045">
    <property type="taxonomic scope" value="Bacteria"/>
</dbReference>
<dbReference type="HOGENOM" id="CLU_037430_0_2_0"/>
<dbReference type="InParanoid" id="A9WJ74"/>
<dbReference type="UniPathway" id="UPA00223">
    <property type="reaction ID" value="UER00999"/>
</dbReference>
<dbReference type="Proteomes" id="UP000002008">
    <property type="component" value="Chromosome"/>
</dbReference>
<dbReference type="GO" id="GO:0005829">
    <property type="term" value="C:cytosol"/>
    <property type="evidence" value="ECO:0000318"/>
    <property type="project" value="GO_Central"/>
</dbReference>
<dbReference type="GO" id="GO:0042709">
    <property type="term" value="C:succinate-CoA ligase complex"/>
    <property type="evidence" value="ECO:0000318"/>
    <property type="project" value="GO_Central"/>
</dbReference>
<dbReference type="GO" id="GO:0005524">
    <property type="term" value="F:ATP binding"/>
    <property type="evidence" value="ECO:0007669"/>
    <property type="project" value="UniProtKB-UniRule"/>
</dbReference>
<dbReference type="GO" id="GO:0000287">
    <property type="term" value="F:magnesium ion binding"/>
    <property type="evidence" value="ECO:0007669"/>
    <property type="project" value="UniProtKB-UniRule"/>
</dbReference>
<dbReference type="GO" id="GO:0004775">
    <property type="term" value="F:succinate-CoA ligase (ADP-forming) activity"/>
    <property type="evidence" value="ECO:0000318"/>
    <property type="project" value="GO_Central"/>
</dbReference>
<dbReference type="GO" id="GO:0004776">
    <property type="term" value="F:succinate-CoA ligase (GDP-forming) activity"/>
    <property type="evidence" value="ECO:0007669"/>
    <property type="project" value="RHEA"/>
</dbReference>
<dbReference type="GO" id="GO:0006104">
    <property type="term" value="P:succinyl-CoA metabolic process"/>
    <property type="evidence" value="ECO:0000318"/>
    <property type="project" value="GO_Central"/>
</dbReference>
<dbReference type="GO" id="GO:0006099">
    <property type="term" value="P:tricarboxylic acid cycle"/>
    <property type="evidence" value="ECO:0000318"/>
    <property type="project" value="GO_Central"/>
</dbReference>
<dbReference type="FunFam" id="3.30.1490.20:FF:000014">
    <property type="entry name" value="Succinate--CoA ligase [ADP-forming] subunit beta"/>
    <property type="match status" value="1"/>
</dbReference>
<dbReference type="FunFam" id="3.30.470.20:FF:000002">
    <property type="entry name" value="Succinate--CoA ligase [ADP-forming] subunit beta"/>
    <property type="match status" value="1"/>
</dbReference>
<dbReference type="FunFam" id="3.40.50.261:FF:000001">
    <property type="entry name" value="Succinate--CoA ligase [ADP-forming] subunit beta"/>
    <property type="match status" value="1"/>
</dbReference>
<dbReference type="Gene3D" id="3.30.1490.20">
    <property type="entry name" value="ATP-grasp fold, A domain"/>
    <property type="match status" value="1"/>
</dbReference>
<dbReference type="Gene3D" id="3.30.470.20">
    <property type="entry name" value="ATP-grasp fold, B domain"/>
    <property type="match status" value="1"/>
</dbReference>
<dbReference type="Gene3D" id="3.40.50.261">
    <property type="entry name" value="Succinyl-CoA synthetase domains"/>
    <property type="match status" value="1"/>
</dbReference>
<dbReference type="HAMAP" id="MF_00558">
    <property type="entry name" value="Succ_CoA_beta"/>
    <property type="match status" value="1"/>
</dbReference>
<dbReference type="InterPro" id="IPR011761">
    <property type="entry name" value="ATP-grasp"/>
</dbReference>
<dbReference type="InterPro" id="IPR013650">
    <property type="entry name" value="ATP-grasp_succ-CoA_synth-type"/>
</dbReference>
<dbReference type="InterPro" id="IPR013815">
    <property type="entry name" value="ATP_grasp_subdomain_1"/>
</dbReference>
<dbReference type="InterPro" id="IPR017866">
    <property type="entry name" value="Succ-CoA_synthase_bsu_CS"/>
</dbReference>
<dbReference type="InterPro" id="IPR005811">
    <property type="entry name" value="SUCC_ACL_C"/>
</dbReference>
<dbReference type="InterPro" id="IPR005809">
    <property type="entry name" value="Succ_CoA_ligase-like_bsu"/>
</dbReference>
<dbReference type="InterPro" id="IPR016102">
    <property type="entry name" value="Succinyl-CoA_synth-like"/>
</dbReference>
<dbReference type="NCBIfam" id="NF001913">
    <property type="entry name" value="PRK00696.1"/>
    <property type="match status" value="1"/>
</dbReference>
<dbReference type="NCBIfam" id="TIGR01016">
    <property type="entry name" value="sucCoAbeta"/>
    <property type="match status" value="1"/>
</dbReference>
<dbReference type="PANTHER" id="PTHR11815:SF10">
    <property type="entry name" value="SUCCINATE--COA LIGASE [GDP-FORMING] SUBUNIT BETA, MITOCHONDRIAL"/>
    <property type="match status" value="1"/>
</dbReference>
<dbReference type="PANTHER" id="PTHR11815">
    <property type="entry name" value="SUCCINYL-COA SYNTHETASE BETA CHAIN"/>
    <property type="match status" value="1"/>
</dbReference>
<dbReference type="Pfam" id="PF08442">
    <property type="entry name" value="ATP-grasp_2"/>
    <property type="match status" value="1"/>
</dbReference>
<dbReference type="Pfam" id="PF00549">
    <property type="entry name" value="Ligase_CoA"/>
    <property type="match status" value="1"/>
</dbReference>
<dbReference type="PIRSF" id="PIRSF001554">
    <property type="entry name" value="SucCS_beta"/>
    <property type="match status" value="1"/>
</dbReference>
<dbReference type="SUPFAM" id="SSF56059">
    <property type="entry name" value="Glutathione synthetase ATP-binding domain-like"/>
    <property type="match status" value="1"/>
</dbReference>
<dbReference type="SUPFAM" id="SSF52210">
    <property type="entry name" value="Succinyl-CoA synthetase domains"/>
    <property type="match status" value="1"/>
</dbReference>
<dbReference type="PROSITE" id="PS50975">
    <property type="entry name" value="ATP_GRASP"/>
    <property type="match status" value="1"/>
</dbReference>
<dbReference type="PROSITE" id="PS01217">
    <property type="entry name" value="SUCCINYL_COA_LIG_3"/>
    <property type="match status" value="1"/>
</dbReference>
<name>SUCC_CHLAA</name>
<gene>
    <name evidence="1" type="primary">sucC</name>
    <name type="ordered locus">Caur_1121</name>
</gene>
<evidence type="ECO:0000255" key="1">
    <source>
        <dbReference type="HAMAP-Rule" id="MF_00558"/>
    </source>
</evidence>
<reference key="1">
    <citation type="journal article" date="2011" name="BMC Genomics">
        <title>Complete genome sequence of the filamentous anoxygenic phototrophic bacterium Chloroflexus aurantiacus.</title>
        <authorList>
            <person name="Tang K.H."/>
            <person name="Barry K."/>
            <person name="Chertkov O."/>
            <person name="Dalin E."/>
            <person name="Han C.S."/>
            <person name="Hauser L.J."/>
            <person name="Honchak B.M."/>
            <person name="Karbach L.E."/>
            <person name="Land M.L."/>
            <person name="Lapidus A."/>
            <person name="Larimer F.W."/>
            <person name="Mikhailova N."/>
            <person name="Pitluck S."/>
            <person name="Pierson B.K."/>
            <person name="Blankenship R.E."/>
        </authorList>
    </citation>
    <scope>NUCLEOTIDE SEQUENCE [LARGE SCALE GENOMIC DNA]</scope>
    <source>
        <strain>ATCC 29366 / DSM 635 / J-10-fl</strain>
    </source>
</reference>
<feature type="chain" id="PRO_1000082058" description="Succinate--CoA ligase [ADP-forming] subunit beta">
    <location>
        <begin position="1"/>
        <end position="380"/>
    </location>
</feature>
<feature type="domain" description="ATP-grasp" evidence="1">
    <location>
        <begin position="9"/>
        <end position="237"/>
    </location>
</feature>
<feature type="binding site" evidence="1">
    <location>
        <position position="45"/>
    </location>
    <ligand>
        <name>ATP</name>
        <dbReference type="ChEBI" id="CHEBI:30616"/>
    </ligand>
</feature>
<feature type="binding site" evidence="1">
    <location>
        <begin position="52"/>
        <end position="54"/>
    </location>
    <ligand>
        <name>ATP</name>
        <dbReference type="ChEBI" id="CHEBI:30616"/>
    </ligand>
</feature>
<feature type="binding site" evidence="1">
    <location>
        <position position="94"/>
    </location>
    <ligand>
        <name>ATP</name>
        <dbReference type="ChEBI" id="CHEBI:30616"/>
    </ligand>
</feature>
<feature type="binding site" evidence="1">
    <location>
        <position position="99"/>
    </location>
    <ligand>
        <name>ATP</name>
        <dbReference type="ChEBI" id="CHEBI:30616"/>
    </ligand>
</feature>
<feature type="binding site" evidence="1">
    <location>
        <position position="192"/>
    </location>
    <ligand>
        <name>Mg(2+)</name>
        <dbReference type="ChEBI" id="CHEBI:18420"/>
    </ligand>
</feature>
<feature type="binding site" evidence="1">
    <location>
        <position position="206"/>
    </location>
    <ligand>
        <name>Mg(2+)</name>
        <dbReference type="ChEBI" id="CHEBI:18420"/>
    </ligand>
</feature>
<feature type="binding site" evidence="1">
    <location>
        <position position="257"/>
    </location>
    <ligand>
        <name>substrate</name>
        <note>ligand shared with subunit alpha</note>
    </ligand>
</feature>
<feature type="binding site" evidence="1">
    <location>
        <begin position="314"/>
        <end position="316"/>
    </location>
    <ligand>
        <name>substrate</name>
        <note>ligand shared with subunit alpha</note>
    </ligand>
</feature>
<proteinExistence type="inferred from homology"/>
<comment type="function">
    <text evidence="1">Succinyl-CoA synthetase functions in the citric acid cycle (TCA), coupling the hydrolysis of succinyl-CoA to the synthesis of either ATP or GTP and thus represents the only step of substrate-level phosphorylation in the TCA. The beta subunit provides nucleotide specificity of the enzyme and binds the substrate succinate, while the binding sites for coenzyme A and phosphate are found in the alpha subunit.</text>
</comment>
<comment type="catalytic activity">
    <reaction evidence="1">
        <text>succinate + ATP + CoA = succinyl-CoA + ADP + phosphate</text>
        <dbReference type="Rhea" id="RHEA:17661"/>
        <dbReference type="ChEBI" id="CHEBI:30031"/>
        <dbReference type="ChEBI" id="CHEBI:30616"/>
        <dbReference type="ChEBI" id="CHEBI:43474"/>
        <dbReference type="ChEBI" id="CHEBI:57287"/>
        <dbReference type="ChEBI" id="CHEBI:57292"/>
        <dbReference type="ChEBI" id="CHEBI:456216"/>
        <dbReference type="EC" id="6.2.1.5"/>
    </reaction>
    <physiologicalReaction direction="right-to-left" evidence="1">
        <dbReference type="Rhea" id="RHEA:17663"/>
    </physiologicalReaction>
</comment>
<comment type="catalytic activity">
    <reaction evidence="1">
        <text>GTP + succinate + CoA = succinyl-CoA + GDP + phosphate</text>
        <dbReference type="Rhea" id="RHEA:22120"/>
        <dbReference type="ChEBI" id="CHEBI:30031"/>
        <dbReference type="ChEBI" id="CHEBI:37565"/>
        <dbReference type="ChEBI" id="CHEBI:43474"/>
        <dbReference type="ChEBI" id="CHEBI:57287"/>
        <dbReference type="ChEBI" id="CHEBI:57292"/>
        <dbReference type="ChEBI" id="CHEBI:58189"/>
    </reaction>
    <physiologicalReaction direction="right-to-left" evidence="1">
        <dbReference type="Rhea" id="RHEA:22122"/>
    </physiologicalReaction>
</comment>
<comment type="cofactor">
    <cofactor evidence="1">
        <name>Mg(2+)</name>
        <dbReference type="ChEBI" id="CHEBI:18420"/>
    </cofactor>
    <text evidence="1">Binds 1 Mg(2+) ion per subunit.</text>
</comment>
<comment type="pathway">
    <text evidence="1">Carbohydrate metabolism; tricarboxylic acid cycle; succinate from succinyl-CoA (ligase route): step 1/1.</text>
</comment>
<comment type="subunit">
    <text evidence="1">Heterotetramer of two alpha and two beta subunits.</text>
</comment>
<comment type="similarity">
    <text evidence="1">Belongs to the succinate/malate CoA ligase beta subunit family.</text>
</comment>
<sequence length="380" mass="39885">MKLHEYQARDLLARFGIPVTGGGVAVTPVEARTIAAEIGGPVVVKAQVHVGGRGKAGGVKLAQTPTEAEQVARQILGMNIKGLTVEKVLVAEAVSYKRELYLSAILDRGSKRVMMIASAEGGVEIEEVAKTNPDAIIKIPAHPTMGLLDFQARELAFRIGLNDGKQARQFAQIASALYRAFVECDASLVEINPLVVKADGSLLALDSKILLDESALFRHPDLAALHDPSAEPEAERRAREAGITYIKLDGNIGCMVNGAGLAMATMDVIKLSGGEPANFLDIGGGAGKEKVKAALQIILSDPNVKAVLFNIFGGITRVDEVARGIIAALEEVPTDVPMVARLVGTNEEAGRALLAESKLIPAATLAEGAQKAVAAARGEL</sequence>
<accession>A9WJ74</accession>
<organism>
    <name type="scientific">Chloroflexus aurantiacus (strain ATCC 29366 / DSM 635 / J-10-fl)</name>
    <dbReference type="NCBI Taxonomy" id="324602"/>
    <lineage>
        <taxon>Bacteria</taxon>
        <taxon>Bacillati</taxon>
        <taxon>Chloroflexota</taxon>
        <taxon>Chloroflexia</taxon>
        <taxon>Chloroflexales</taxon>
        <taxon>Chloroflexineae</taxon>
        <taxon>Chloroflexaceae</taxon>
        <taxon>Chloroflexus</taxon>
    </lineage>
</organism>
<keyword id="KW-0067">ATP-binding</keyword>
<keyword id="KW-0436">Ligase</keyword>
<keyword id="KW-0460">Magnesium</keyword>
<keyword id="KW-0479">Metal-binding</keyword>
<keyword id="KW-0547">Nucleotide-binding</keyword>
<keyword id="KW-1185">Reference proteome</keyword>
<keyword id="KW-0816">Tricarboxylic acid cycle</keyword>